<organism>
    <name type="scientific">Staphylococcus aureus (strain COL)</name>
    <dbReference type="NCBI Taxonomy" id="93062"/>
    <lineage>
        <taxon>Bacteria</taxon>
        <taxon>Bacillati</taxon>
        <taxon>Bacillota</taxon>
        <taxon>Bacilli</taxon>
        <taxon>Bacillales</taxon>
        <taxon>Staphylococcaceae</taxon>
        <taxon>Staphylococcus</taxon>
    </lineage>
</organism>
<feature type="initiator methionine" description="Removed" evidence="1">
    <location>
        <position position="1"/>
    </location>
</feature>
<feature type="chain" id="PRO_0000145337" description="DNA gyrase subunit B">
    <location>
        <begin position="2"/>
        <end position="644"/>
    </location>
</feature>
<feature type="domain" description="Toprim" evidence="2">
    <location>
        <begin position="429"/>
        <end position="543"/>
    </location>
</feature>
<feature type="binding site" evidence="2">
    <location>
        <position position="435"/>
    </location>
    <ligand>
        <name>Mg(2+)</name>
        <dbReference type="ChEBI" id="CHEBI:18420"/>
        <label>1</label>
        <note>catalytic</note>
    </ligand>
</feature>
<feature type="binding site" evidence="2">
    <location>
        <position position="508"/>
    </location>
    <ligand>
        <name>Mg(2+)</name>
        <dbReference type="ChEBI" id="CHEBI:18420"/>
        <label>1</label>
        <note>catalytic</note>
    </ligand>
</feature>
<feature type="binding site" evidence="2">
    <location>
        <position position="508"/>
    </location>
    <ligand>
        <name>Mg(2+)</name>
        <dbReference type="ChEBI" id="CHEBI:18420"/>
        <label>2</label>
    </ligand>
</feature>
<feature type="binding site" evidence="2">
    <location>
        <position position="510"/>
    </location>
    <ligand>
        <name>Mg(2+)</name>
        <dbReference type="ChEBI" id="CHEBI:18420"/>
        <label>2</label>
    </ligand>
</feature>
<feature type="site" description="Interaction with DNA" evidence="2">
    <location>
        <position position="460"/>
    </location>
</feature>
<feature type="site" description="Interaction with DNA" evidence="2">
    <location>
        <position position="463"/>
    </location>
</feature>
<protein>
    <recommendedName>
        <fullName evidence="2">DNA gyrase subunit B</fullName>
        <ecNumber evidence="2">5.6.2.2</ecNumber>
    </recommendedName>
</protein>
<sequence length="644" mass="72512">MVTALSDVNNTDNYGAGQIQVLEGLEAARKRPGMYIGSTSERGLHHLVWEIVDNSIDEALAGYANQIEVVIEKDNWIKVTDNGRGIPVDIQEKMGRPAVEVILTVLHAGGKFGGGGYKVSGGLHGVGSSVVNALSQDLEVYVHRNETIYHQAYKKGVPQFDLKEVGTTDKTGTVIRFKADGEIFTETTVYNYETLQQRIRELAFLNKGIQITLRDERDEENVREDSYHYEGGIKSYVELLNENKEPIHDEPIYIHQSKDDIEVEIAIQYNSGYATNLLTYANNIHTYEGGTHEDGFKRALTRVLNSYGLSSKIMKEEKDRLSGEDTREGMTAIISIKHGDPQFEGQTKTKLGNSEVRQVVDKLFSEHFERFLYENPQVARTVVEKGIMAARARVAAKKAREVTRRKSALDVASLPGKLADCSSKSPEECEIFLVEGDSAGGSTKSGRDSRTQAILPLRGKILNVEKARLDRILNNNEIRQMITAFGTGIGGDFDLAKARYHKIVIMTDADVDGAHIRTLLLTFFYRFMRPLIEAGYVYIAQPPLYKLTQGKQKYYVYNDRELDKLKSELNPTPKWSIARYKGLGEMNADQLWETTMNPEHRALLQVKLEDAIEADQTFEMLMGDVVENRRQFIEDNAVYANLDF</sequence>
<proteinExistence type="inferred from homology"/>
<name>GYRB_STAAC</name>
<evidence type="ECO:0000250" key="1"/>
<evidence type="ECO:0000255" key="2">
    <source>
        <dbReference type="HAMAP-Rule" id="MF_01898"/>
    </source>
</evidence>
<accession>Q5HJZ1</accession>
<comment type="function">
    <text evidence="2">A type II topoisomerase that negatively supercoils closed circular double-stranded (ds) DNA in an ATP-dependent manner to modulate DNA topology and maintain chromosomes in an underwound state. Negative supercoiling favors strand separation, and DNA replication, transcription, recombination and repair, all of which involve strand separation. Also able to catalyze the interconversion of other topological isomers of dsDNA rings, including catenanes and knotted rings. Type II topoisomerases break and join 2 DNA strands simultaneously in an ATP-dependent manner.</text>
</comment>
<comment type="catalytic activity">
    <reaction evidence="2">
        <text>ATP-dependent breakage, passage and rejoining of double-stranded DNA.</text>
        <dbReference type="EC" id="5.6.2.2"/>
    </reaction>
</comment>
<comment type="cofactor">
    <cofactor evidence="2">
        <name>Mg(2+)</name>
        <dbReference type="ChEBI" id="CHEBI:18420"/>
    </cofactor>
    <cofactor evidence="2">
        <name>Mn(2+)</name>
        <dbReference type="ChEBI" id="CHEBI:29035"/>
    </cofactor>
    <cofactor evidence="2">
        <name>Ca(2+)</name>
        <dbReference type="ChEBI" id="CHEBI:29108"/>
    </cofactor>
    <text evidence="2">Binds two Mg(2+) per subunit. The magnesium ions form salt bridges with both the protein and the DNA. Can also accept other divalent metal cations, such as Mn(2+) or Ca(2+).</text>
</comment>
<comment type="subunit">
    <text evidence="2">Heterotetramer, composed of two GyrA and two GyrB chains. In the heterotetramer, GyrA contains the active site tyrosine that forms a transient covalent intermediate with DNA, while GyrB binds cofactors and catalyzes ATP hydrolysis.</text>
</comment>
<comment type="subcellular location">
    <subcellularLocation>
        <location evidence="2">Cytoplasm</location>
    </subcellularLocation>
</comment>
<comment type="miscellaneous">
    <text evidence="2">Few gyrases are as efficient as E.coli at forming negative supercoils. Not all organisms have 2 type II topoisomerases; in organisms with a single type II topoisomerase this enzyme also has to decatenate newly replicated chromosomes.</text>
</comment>
<comment type="similarity">
    <text evidence="2">Belongs to the type II topoisomerase GyrB family.</text>
</comment>
<dbReference type="EC" id="5.6.2.2" evidence="2"/>
<dbReference type="EMBL" id="CP000046">
    <property type="protein sequence ID" value="AAW37393.1"/>
    <property type="molecule type" value="Genomic_DNA"/>
</dbReference>
<dbReference type="RefSeq" id="WP_000255576.1">
    <property type="nucleotide sequence ID" value="NC_002951.2"/>
</dbReference>
<dbReference type="SMR" id="Q5HJZ1"/>
<dbReference type="KEGG" id="sac:SACOL0005"/>
<dbReference type="HOGENOM" id="CLU_006146_1_2_9"/>
<dbReference type="Proteomes" id="UP000000530">
    <property type="component" value="Chromosome"/>
</dbReference>
<dbReference type="GO" id="GO:0005694">
    <property type="term" value="C:chromosome"/>
    <property type="evidence" value="ECO:0007669"/>
    <property type="project" value="InterPro"/>
</dbReference>
<dbReference type="GO" id="GO:0005737">
    <property type="term" value="C:cytoplasm"/>
    <property type="evidence" value="ECO:0007669"/>
    <property type="project" value="UniProtKB-SubCell"/>
</dbReference>
<dbReference type="GO" id="GO:0005524">
    <property type="term" value="F:ATP binding"/>
    <property type="evidence" value="ECO:0007669"/>
    <property type="project" value="UniProtKB-UniRule"/>
</dbReference>
<dbReference type="GO" id="GO:0003677">
    <property type="term" value="F:DNA binding"/>
    <property type="evidence" value="ECO:0007669"/>
    <property type="project" value="UniProtKB-KW"/>
</dbReference>
<dbReference type="GO" id="GO:0034335">
    <property type="term" value="F:DNA negative supercoiling activity"/>
    <property type="evidence" value="ECO:0007669"/>
    <property type="project" value="UniProtKB-ARBA"/>
</dbReference>
<dbReference type="GO" id="GO:0046872">
    <property type="term" value="F:metal ion binding"/>
    <property type="evidence" value="ECO:0007669"/>
    <property type="project" value="UniProtKB-KW"/>
</dbReference>
<dbReference type="GO" id="GO:0006265">
    <property type="term" value="P:DNA topological change"/>
    <property type="evidence" value="ECO:0007669"/>
    <property type="project" value="UniProtKB-UniRule"/>
</dbReference>
<dbReference type="GO" id="GO:0006261">
    <property type="term" value="P:DNA-templated DNA replication"/>
    <property type="evidence" value="ECO:0007669"/>
    <property type="project" value="UniProtKB-UniRule"/>
</dbReference>
<dbReference type="CDD" id="cd16928">
    <property type="entry name" value="HATPase_GyrB-like"/>
    <property type="match status" value="1"/>
</dbReference>
<dbReference type="CDD" id="cd00822">
    <property type="entry name" value="TopoII_Trans_DNA_gyrase"/>
    <property type="match status" value="1"/>
</dbReference>
<dbReference type="CDD" id="cd03366">
    <property type="entry name" value="TOPRIM_TopoIIA_GyrB"/>
    <property type="match status" value="1"/>
</dbReference>
<dbReference type="FunFam" id="3.30.230.10:FF:000005">
    <property type="entry name" value="DNA gyrase subunit B"/>
    <property type="match status" value="1"/>
</dbReference>
<dbReference type="FunFam" id="3.30.565.10:FF:000002">
    <property type="entry name" value="DNA gyrase subunit B"/>
    <property type="match status" value="1"/>
</dbReference>
<dbReference type="FunFam" id="3.40.50.670:FF:000002">
    <property type="entry name" value="DNA gyrase subunit B"/>
    <property type="match status" value="1"/>
</dbReference>
<dbReference type="Gene3D" id="3.30.230.10">
    <property type="match status" value="1"/>
</dbReference>
<dbReference type="Gene3D" id="3.40.50.670">
    <property type="match status" value="1"/>
</dbReference>
<dbReference type="Gene3D" id="3.30.565.10">
    <property type="entry name" value="Histidine kinase-like ATPase, C-terminal domain"/>
    <property type="match status" value="1"/>
</dbReference>
<dbReference type="HAMAP" id="MF_01898">
    <property type="entry name" value="GyrB"/>
    <property type="match status" value="1"/>
</dbReference>
<dbReference type="InterPro" id="IPR002288">
    <property type="entry name" value="DNA_gyrase_B_C"/>
</dbReference>
<dbReference type="InterPro" id="IPR011557">
    <property type="entry name" value="GyrB"/>
</dbReference>
<dbReference type="InterPro" id="IPR036890">
    <property type="entry name" value="HATPase_C_sf"/>
</dbReference>
<dbReference type="InterPro" id="IPR020568">
    <property type="entry name" value="Ribosomal_Su5_D2-typ_SF"/>
</dbReference>
<dbReference type="InterPro" id="IPR014721">
    <property type="entry name" value="Ribsml_uS5_D2-typ_fold_subgr"/>
</dbReference>
<dbReference type="InterPro" id="IPR001241">
    <property type="entry name" value="Topo_IIA"/>
</dbReference>
<dbReference type="InterPro" id="IPR013760">
    <property type="entry name" value="Topo_IIA-like_dom_sf"/>
</dbReference>
<dbReference type="InterPro" id="IPR000565">
    <property type="entry name" value="Topo_IIA_B"/>
</dbReference>
<dbReference type="InterPro" id="IPR013759">
    <property type="entry name" value="Topo_IIA_B_C"/>
</dbReference>
<dbReference type="InterPro" id="IPR013506">
    <property type="entry name" value="Topo_IIA_bsu_dom2"/>
</dbReference>
<dbReference type="InterPro" id="IPR018522">
    <property type="entry name" value="TopoIIA_CS"/>
</dbReference>
<dbReference type="InterPro" id="IPR006171">
    <property type="entry name" value="TOPRIM_dom"/>
</dbReference>
<dbReference type="InterPro" id="IPR034160">
    <property type="entry name" value="TOPRIM_GyrB"/>
</dbReference>
<dbReference type="NCBIfam" id="TIGR01059">
    <property type="entry name" value="gyrB"/>
    <property type="match status" value="1"/>
</dbReference>
<dbReference type="NCBIfam" id="NF004189">
    <property type="entry name" value="PRK05644.1"/>
    <property type="match status" value="1"/>
</dbReference>
<dbReference type="NCBIfam" id="NF011501">
    <property type="entry name" value="PRK14939.1"/>
    <property type="match status" value="1"/>
</dbReference>
<dbReference type="PANTHER" id="PTHR45866:SF1">
    <property type="entry name" value="DNA GYRASE SUBUNIT B, MITOCHONDRIAL"/>
    <property type="match status" value="1"/>
</dbReference>
<dbReference type="PANTHER" id="PTHR45866">
    <property type="entry name" value="DNA GYRASE/TOPOISOMERASE SUBUNIT B"/>
    <property type="match status" value="1"/>
</dbReference>
<dbReference type="Pfam" id="PF00204">
    <property type="entry name" value="DNA_gyraseB"/>
    <property type="match status" value="1"/>
</dbReference>
<dbReference type="Pfam" id="PF00986">
    <property type="entry name" value="DNA_gyraseB_C"/>
    <property type="match status" value="1"/>
</dbReference>
<dbReference type="Pfam" id="PF02518">
    <property type="entry name" value="HATPase_c"/>
    <property type="match status" value="1"/>
</dbReference>
<dbReference type="Pfam" id="PF01751">
    <property type="entry name" value="Toprim"/>
    <property type="match status" value="1"/>
</dbReference>
<dbReference type="PRINTS" id="PR01159">
    <property type="entry name" value="DNAGYRASEB"/>
</dbReference>
<dbReference type="PRINTS" id="PR00418">
    <property type="entry name" value="TPI2FAMILY"/>
</dbReference>
<dbReference type="SMART" id="SM00387">
    <property type="entry name" value="HATPase_c"/>
    <property type="match status" value="1"/>
</dbReference>
<dbReference type="SMART" id="SM00433">
    <property type="entry name" value="TOP2c"/>
    <property type="match status" value="1"/>
</dbReference>
<dbReference type="SUPFAM" id="SSF55874">
    <property type="entry name" value="ATPase domain of HSP90 chaperone/DNA topoisomerase II/histidine kinase"/>
    <property type="match status" value="1"/>
</dbReference>
<dbReference type="SUPFAM" id="SSF54211">
    <property type="entry name" value="Ribosomal protein S5 domain 2-like"/>
    <property type="match status" value="1"/>
</dbReference>
<dbReference type="SUPFAM" id="SSF56719">
    <property type="entry name" value="Type II DNA topoisomerase"/>
    <property type="match status" value="1"/>
</dbReference>
<dbReference type="PROSITE" id="PS00177">
    <property type="entry name" value="TOPOISOMERASE_II"/>
    <property type="match status" value="1"/>
</dbReference>
<dbReference type="PROSITE" id="PS50880">
    <property type="entry name" value="TOPRIM"/>
    <property type="match status" value="1"/>
</dbReference>
<gene>
    <name evidence="2" type="primary">gyrB</name>
    <name type="ordered locus">SACOL0005</name>
</gene>
<reference key="1">
    <citation type="journal article" date="2005" name="J. Bacteriol.">
        <title>Insights on evolution of virulence and resistance from the complete genome analysis of an early methicillin-resistant Staphylococcus aureus strain and a biofilm-producing methicillin-resistant Staphylococcus epidermidis strain.</title>
        <authorList>
            <person name="Gill S.R."/>
            <person name="Fouts D.E."/>
            <person name="Archer G.L."/>
            <person name="Mongodin E.F."/>
            <person name="DeBoy R.T."/>
            <person name="Ravel J."/>
            <person name="Paulsen I.T."/>
            <person name="Kolonay J.F."/>
            <person name="Brinkac L.M."/>
            <person name="Beanan M.J."/>
            <person name="Dodson R.J."/>
            <person name="Daugherty S.C."/>
            <person name="Madupu R."/>
            <person name="Angiuoli S.V."/>
            <person name="Durkin A.S."/>
            <person name="Haft D.H."/>
            <person name="Vamathevan J.J."/>
            <person name="Khouri H."/>
            <person name="Utterback T.R."/>
            <person name="Lee C."/>
            <person name="Dimitrov G."/>
            <person name="Jiang L."/>
            <person name="Qin H."/>
            <person name="Weidman J."/>
            <person name="Tran K."/>
            <person name="Kang K.H."/>
            <person name="Hance I.R."/>
            <person name="Nelson K.E."/>
            <person name="Fraser C.M."/>
        </authorList>
    </citation>
    <scope>NUCLEOTIDE SEQUENCE [LARGE SCALE GENOMIC DNA]</scope>
    <source>
        <strain>COL</strain>
    </source>
</reference>
<keyword id="KW-0067">ATP-binding</keyword>
<keyword id="KW-0963">Cytoplasm</keyword>
<keyword id="KW-0238">DNA-binding</keyword>
<keyword id="KW-0413">Isomerase</keyword>
<keyword id="KW-0460">Magnesium</keyword>
<keyword id="KW-0479">Metal-binding</keyword>
<keyword id="KW-0547">Nucleotide-binding</keyword>
<keyword id="KW-0799">Topoisomerase</keyword>